<protein>
    <recommendedName>
        <fullName>IQ domain-containing protein H</fullName>
    </recommendedName>
    <alternativeName>
        <fullName>Testis development protein NYD-SP5</fullName>
    </alternativeName>
</protein>
<accession>Q86VS3</accession>
<accession>A8K8W3</accession>
<accession>C9JPR6</accession>
<accession>D6RJ88</accession>
<accession>Q4G0S6</accession>
<accession>Q8NEH9</accession>
<accession>Q9BWX2</accession>
<accession>Q9H9Y1</accession>
<accession>Q9UF88</accession>
<name>IQCH_HUMAN</name>
<evidence type="ECO:0000255" key="1">
    <source>
        <dbReference type="PROSITE-ProRule" id="PRU00116"/>
    </source>
</evidence>
<evidence type="ECO:0000256" key="2">
    <source>
        <dbReference type="SAM" id="MobiDB-lite"/>
    </source>
</evidence>
<evidence type="ECO:0000269" key="3">
    <source>
    </source>
</evidence>
<evidence type="ECO:0000269" key="4">
    <source>
    </source>
</evidence>
<evidence type="ECO:0000269" key="5">
    <source>
    </source>
</evidence>
<evidence type="ECO:0000269" key="6">
    <source>
    </source>
</evidence>
<evidence type="ECO:0000269" key="7">
    <source ref="4"/>
</evidence>
<evidence type="ECO:0000303" key="8">
    <source>
    </source>
</evidence>
<evidence type="ECO:0000303" key="9">
    <source>
    </source>
</evidence>
<evidence type="ECO:0000305" key="10"/>
<dbReference type="EMBL" id="AY014282">
    <property type="protein sequence ID" value="AAK27307.2"/>
    <property type="molecule type" value="mRNA"/>
</dbReference>
<dbReference type="EMBL" id="AK022538">
    <property type="protein sequence ID" value="BAB14087.1"/>
    <property type="molecule type" value="mRNA"/>
</dbReference>
<dbReference type="EMBL" id="AK292478">
    <property type="protein sequence ID" value="BAF85167.1"/>
    <property type="molecule type" value="mRNA"/>
</dbReference>
<dbReference type="EMBL" id="AC012568">
    <property type="status" value="NOT_ANNOTATED_CDS"/>
    <property type="molecule type" value="Genomic_DNA"/>
</dbReference>
<dbReference type="EMBL" id="AC016355">
    <property type="status" value="NOT_ANNOTATED_CDS"/>
    <property type="molecule type" value="Genomic_DNA"/>
</dbReference>
<dbReference type="EMBL" id="AC106000">
    <property type="status" value="NOT_ANNOTATED_CDS"/>
    <property type="molecule type" value="Genomic_DNA"/>
</dbReference>
<dbReference type="EMBL" id="AC110292">
    <property type="status" value="NOT_ANNOTATED_CDS"/>
    <property type="molecule type" value="Genomic_DNA"/>
</dbReference>
<dbReference type="EMBL" id="CH471082">
    <property type="protein sequence ID" value="EAW77796.1"/>
    <property type="molecule type" value="Genomic_DNA"/>
</dbReference>
<dbReference type="EMBL" id="BC031041">
    <property type="protein sequence ID" value="AAH31041.2"/>
    <property type="molecule type" value="mRNA"/>
</dbReference>
<dbReference type="EMBL" id="BC039292">
    <property type="protein sequence ID" value="AAH39292.1"/>
    <property type="molecule type" value="mRNA"/>
</dbReference>
<dbReference type="EMBL" id="BC039463">
    <property type="status" value="NOT_ANNOTATED_CDS"/>
    <property type="molecule type" value="mRNA"/>
</dbReference>
<dbReference type="EMBL" id="BC048964">
    <property type="protein sequence ID" value="AAH48964.1"/>
    <property type="molecule type" value="mRNA"/>
</dbReference>
<dbReference type="EMBL" id="AL133556">
    <property type="protein sequence ID" value="CAB63711.1"/>
    <property type="molecule type" value="mRNA"/>
</dbReference>
<dbReference type="CCDS" id="CCDS10223.2">
    <molecule id="Q86VS3-5"/>
</dbReference>
<dbReference type="CCDS" id="CCDS32273.1">
    <molecule id="Q86VS3-1"/>
</dbReference>
<dbReference type="CCDS" id="CCDS61680.1">
    <molecule id="Q86VS3-4"/>
</dbReference>
<dbReference type="CCDS" id="CCDS61681.1">
    <molecule id="Q86VS3-2"/>
</dbReference>
<dbReference type="CCDS" id="CCDS76772.1">
    <molecule id="Q86VS3-3"/>
</dbReference>
<dbReference type="PIR" id="T43438">
    <property type="entry name" value="T43438"/>
</dbReference>
<dbReference type="RefSeq" id="NP_001026885.2">
    <molecule id="Q86VS3-1"/>
    <property type="nucleotide sequence ID" value="NM_001031715.3"/>
</dbReference>
<dbReference type="RefSeq" id="NP_001271276.2">
    <molecule id="Q86VS3-2"/>
    <property type="nucleotide sequence ID" value="NM_001284347.2"/>
</dbReference>
<dbReference type="RefSeq" id="NP_001271277.2">
    <molecule id="Q86VS3-4"/>
    <property type="nucleotide sequence ID" value="NM_001284348.2"/>
</dbReference>
<dbReference type="RefSeq" id="NP_001271278.1">
    <molecule id="Q86VS3-3"/>
    <property type="nucleotide sequence ID" value="NM_001284349.2"/>
</dbReference>
<dbReference type="RefSeq" id="NP_001309404.1">
    <property type="nucleotide sequence ID" value="NM_001322475.1"/>
</dbReference>
<dbReference type="RefSeq" id="NP_073621.2">
    <molecule id="Q86VS3-5"/>
    <property type="nucleotide sequence ID" value="NM_022784.3"/>
</dbReference>
<dbReference type="BioGRID" id="122305">
    <property type="interactions" value="6"/>
</dbReference>
<dbReference type="FunCoup" id="Q86VS3">
    <property type="interactions" value="49"/>
</dbReference>
<dbReference type="IntAct" id="Q86VS3">
    <property type="interactions" value="3"/>
</dbReference>
<dbReference type="MINT" id="Q86VS3"/>
<dbReference type="STRING" id="9606.ENSP00000336861"/>
<dbReference type="GlyGen" id="Q86VS3">
    <property type="glycosylation" value="1 site, 1 O-linked glycan (1 site)"/>
</dbReference>
<dbReference type="iPTMnet" id="Q86VS3"/>
<dbReference type="PhosphoSitePlus" id="Q86VS3"/>
<dbReference type="BioMuta" id="IQCH"/>
<dbReference type="DMDM" id="269849608"/>
<dbReference type="jPOST" id="Q86VS3"/>
<dbReference type="MassIVE" id="Q86VS3"/>
<dbReference type="PaxDb" id="9606-ENSP00000336861"/>
<dbReference type="PeptideAtlas" id="Q86VS3"/>
<dbReference type="ProteomicsDB" id="15070"/>
<dbReference type="ProteomicsDB" id="70064">
    <molecule id="Q86VS3-1"/>
</dbReference>
<dbReference type="ProteomicsDB" id="70065">
    <molecule id="Q86VS3-2"/>
</dbReference>
<dbReference type="ProteomicsDB" id="70066">
    <molecule id="Q86VS3-3"/>
</dbReference>
<dbReference type="ProteomicsDB" id="70067">
    <molecule id="Q86VS3-4"/>
</dbReference>
<dbReference type="Antibodypedia" id="26248">
    <property type="antibodies" value="28 antibodies from 11 providers"/>
</dbReference>
<dbReference type="DNASU" id="64799"/>
<dbReference type="Ensembl" id="ENST00000335894.9">
    <molecule id="Q86VS3-1"/>
    <property type="protein sequence ID" value="ENSP00000336861.4"/>
    <property type="gene ID" value="ENSG00000103599.20"/>
</dbReference>
<dbReference type="Ensembl" id="ENST00000358767.7">
    <molecule id="Q86VS3-4"/>
    <property type="protein sequence ID" value="ENSP00000351617.4"/>
    <property type="gene ID" value="ENSG00000103599.20"/>
</dbReference>
<dbReference type="Ensembl" id="ENST00000512104.5">
    <molecule id="Q86VS3-5"/>
    <property type="protein sequence ID" value="ENSP00000427323.1"/>
    <property type="gene ID" value="ENSG00000103599.20"/>
</dbReference>
<dbReference type="Ensembl" id="ENST00000546225.5">
    <molecule id="Q86VS3-2"/>
    <property type="protein sequence ID" value="ENSP00000444118.1"/>
    <property type="gene ID" value="ENSG00000103599.20"/>
</dbReference>
<dbReference type="Ensembl" id="ENST00000629425.2">
    <molecule id="Q86VS3-3"/>
    <property type="protein sequence ID" value="ENSP00000486970.1"/>
    <property type="gene ID" value="ENSG00000103599.20"/>
</dbReference>
<dbReference type="GeneID" id="64799"/>
<dbReference type="KEGG" id="hsa:64799"/>
<dbReference type="MANE-Select" id="ENST00000335894.9">
    <property type="protein sequence ID" value="ENSP00000336861.4"/>
    <property type="RefSeq nucleotide sequence ID" value="NM_001031715.3"/>
    <property type="RefSeq protein sequence ID" value="NP_001026885.2"/>
</dbReference>
<dbReference type="UCSC" id="uc002aqm.4">
    <molecule id="Q86VS3-1"/>
    <property type="organism name" value="human"/>
</dbReference>
<dbReference type="AGR" id="HGNC:25721"/>
<dbReference type="CTD" id="64799"/>
<dbReference type="DisGeNET" id="64799"/>
<dbReference type="GeneCards" id="IQCH"/>
<dbReference type="HGNC" id="HGNC:25721">
    <property type="gene designation" value="IQCH"/>
</dbReference>
<dbReference type="HPA" id="ENSG00000103599">
    <property type="expression patterns" value="Tissue enhanced (fallopian tube, testis)"/>
</dbReference>
<dbReference type="MIM" id="612523">
    <property type="type" value="gene"/>
</dbReference>
<dbReference type="neXtProt" id="NX_Q86VS3"/>
<dbReference type="OpenTargets" id="ENSG00000103599"/>
<dbReference type="PharmGKB" id="PA142671654"/>
<dbReference type="VEuPathDB" id="HostDB:ENSG00000103599"/>
<dbReference type="eggNOG" id="ENOG502QSF3">
    <property type="taxonomic scope" value="Eukaryota"/>
</dbReference>
<dbReference type="GeneTree" id="ENSGT00390000008908"/>
<dbReference type="HOGENOM" id="CLU_1708373_0_0_1"/>
<dbReference type="InParanoid" id="Q86VS3"/>
<dbReference type="OMA" id="MHEFIIR"/>
<dbReference type="OrthoDB" id="2117703at2759"/>
<dbReference type="PAN-GO" id="Q86VS3">
    <property type="GO annotations" value="0 GO annotations based on evolutionary models"/>
</dbReference>
<dbReference type="PhylomeDB" id="Q86VS3"/>
<dbReference type="TreeFam" id="TF328488"/>
<dbReference type="PathwayCommons" id="Q86VS3"/>
<dbReference type="SignaLink" id="Q86VS3"/>
<dbReference type="BioGRID-ORCS" id="64799">
    <property type="hits" value="27 hits in 1147 CRISPR screens"/>
</dbReference>
<dbReference type="ChiTaRS" id="IQCH">
    <property type="organism name" value="human"/>
</dbReference>
<dbReference type="GenomeRNAi" id="64799"/>
<dbReference type="Pharos" id="Q86VS3">
    <property type="development level" value="Tdark"/>
</dbReference>
<dbReference type="PRO" id="PR:Q86VS3"/>
<dbReference type="Proteomes" id="UP000005640">
    <property type="component" value="Chromosome 15"/>
</dbReference>
<dbReference type="RNAct" id="Q86VS3">
    <property type="molecule type" value="protein"/>
</dbReference>
<dbReference type="Bgee" id="ENSG00000103599">
    <property type="expression patterns" value="Expressed in male germ line stem cell (sensu Vertebrata) in testis and 113 other cell types or tissues"/>
</dbReference>
<dbReference type="ExpressionAtlas" id="Q86VS3">
    <property type="expression patterns" value="baseline and differential"/>
</dbReference>
<dbReference type="GO" id="GO:0016607">
    <property type="term" value="C:nuclear speck"/>
    <property type="evidence" value="ECO:0007669"/>
    <property type="project" value="Ensembl"/>
</dbReference>
<dbReference type="GO" id="GO:0140742">
    <property type="term" value="P:lncRNA transcription"/>
    <property type="evidence" value="ECO:0007669"/>
    <property type="project" value="Ensembl"/>
</dbReference>
<dbReference type="GO" id="GO:0007338">
    <property type="term" value="P:single fertilization"/>
    <property type="evidence" value="ECO:0007669"/>
    <property type="project" value="Ensembl"/>
</dbReference>
<dbReference type="InterPro" id="IPR056855">
    <property type="entry name" value="ATP-grasp_IQCH"/>
</dbReference>
<dbReference type="InterPro" id="IPR038752">
    <property type="entry name" value="IQCH"/>
</dbReference>
<dbReference type="PANTHER" id="PTHR14465">
    <property type="entry name" value="IQ DOMAIN-CONTAINING PROTEIN H"/>
    <property type="match status" value="1"/>
</dbReference>
<dbReference type="PANTHER" id="PTHR14465:SF0">
    <property type="entry name" value="IQ DOMAIN-CONTAINING PROTEIN H"/>
    <property type="match status" value="1"/>
</dbReference>
<dbReference type="Pfam" id="PF24923">
    <property type="entry name" value="ATP-grasp_IQCH"/>
    <property type="match status" value="1"/>
</dbReference>
<dbReference type="PROSITE" id="PS50096">
    <property type="entry name" value="IQ"/>
    <property type="match status" value="1"/>
</dbReference>
<reference key="1">
    <citation type="journal article" date="2005" name="Asian J. Androl.">
        <title>Identification of a novel testis-specific gene and its potential roles in testis development/spermatogenesis.</title>
        <authorList>
            <person name="Yin L.L."/>
            <person name="Li J.M."/>
            <person name="Zhou Z.M."/>
            <person name="Sha J.H."/>
        </authorList>
    </citation>
    <scope>NUCLEOTIDE SEQUENCE [MRNA] (ISOFORM 1)</scope>
    <scope>FUNCTION</scope>
    <scope>TISSUE SPECIFICITY</scope>
    <scope>VARIANT LEU-932</scope>
</reference>
<reference key="2">
    <citation type="journal article" date="2004" name="Nat. Genet.">
        <title>Complete sequencing and characterization of 21,243 full-length human cDNAs.</title>
        <authorList>
            <person name="Ota T."/>
            <person name="Suzuki Y."/>
            <person name="Nishikawa T."/>
            <person name="Otsuki T."/>
            <person name="Sugiyama T."/>
            <person name="Irie R."/>
            <person name="Wakamatsu A."/>
            <person name="Hayashi K."/>
            <person name="Sato H."/>
            <person name="Nagai K."/>
            <person name="Kimura K."/>
            <person name="Makita H."/>
            <person name="Sekine M."/>
            <person name="Obayashi M."/>
            <person name="Nishi T."/>
            <person name="Shibahara T."/>
            <person name="Tanaka T."/>
            <person name="Ishii S."/>
            <person name="Yamamoto J."/>
            <person name="Saito K."/>
            <person name="Kawai Y."/>
            <person name="Isono Y."/>
            <person name="Nakamura Y."/>
            <person name="Nagahari K."/>
            <person name="Murakami K."/>
            <person name="Yasuda T."/>
            <person name="Iwayanagi T."/>
            <person name="Wagatsuma M."/>
            <person name="Shiratori A."/>
            <person name="Sudo H."/>
            <person name="Hosoiri T."/>
            <person name="Kaku Y."/>
            <person name="Kodaira H."/>
            <person name="Kondo H."/>
            <person name="Sugawara M."/>
            <person name="Takahashi M."/>
            <person name="Kanda K."/>
            <person name="Yokoi T."/>
            <person name="Furuya T."/>
            <person name="Kikkawa E."/>
            <person name="Omura Y."/>
            <person name="Abe K."/>
            <person name="Kamihara K."/>
            <person name="Katsuta N."/>
            <person name="Sato K."/>
            <person name="Tanikawa M."/>
            <person name="Yamazaki M."/>
            <person name="Ninomiya K."/>
            <person name="Ishibashi T."/>
            <person name="Yamashita H."/>
            <person name="Murakawa K."/>
            <person name="Fujimori K."/>
            <person name="Tanai H."/>
            <person name="Kimata M."/>
            <person name="Watanabe M."/>
            <person name="Hiraoka S."/>
            <person name="Chiba Y."/>
            <person name="Ishida S."/>
            <person name="Ono Y."/>
            <person name="Takiguchi S."/>
            <person name="Watanabe S."/>
            <person name="Yosida M."/>
            <person name="Hotuta T."/>
            <person name="Kusano J."/>
            <person name="Kanehori K."/>
            <person name="Takahashi-Fujii A."/>
            <person name="Hara H."/>
            <person name="Tanase T.-O."/>
            <person name="Nomura Y."/>
            <person name="Togiya S."/>
            <person name="Komai F."/>
            <person name="Hara R."/>
            <person name="Takeuchi K."/>
            <person name="Arita M."/>
            <person name="Imose N."/>
            <person name="Musashino K."/>
            <person name="Yuuki H."/>
            <person name="Oshima A."/>
            <person name="Sasaki N."/>
            <person name="Aotsuka S."/>
            <person name="Yoshikawa Y."/>
            <person name="Matsunawa H."/>
            <person name="Ichihara T."/>
            <person name="Shiohata N."/>
            <person name="Sano S."/>
            <person name="Moriya S."/>
            <person name="Momiyama H."/>
            <person name="Satoh N."/>
            <person name="Takami S."/>
            <person name="Terashima Y."/>
            <person name="Suzuki O."/>
            <person name="Nakagawa S."/>
            <person name="Senoh A."/>
            <person name="Mizoguchi H."/>
            <person name="Goto Y."/>
            <person name="Shimizu F."/>
            <person name="Wakebe H."/>
            <person name="Hishigaki H."/>
            <person name="Watanabe T."/>
            <person name="Sugiyama A."/>
            <person name="Takemoto M."/>
            <person name="Kawakami B."/>
            <person name="Yamazaki M."/>
            <person name="Watanabe K."/>
            <person name="Kumagai A."/>
            <person name="Itakura S."/>
            <person name="Fukuzumi Y."/>
            <person name="Fujimori Y."/>
            <person name="Komiyama M."/>
            <person name="Tashiro H."/>
            <person name="Tanigami A."/>
            <person name="Fujiwara T."/>
            <person name="Ono T."/>
            <person name="Yamada K."/>
            <person name="Fujii Y."/>
            <person name="Ozaki K."/>
            <person name="Hirao M."/>
            <person name="Ohmori Y."/>
            <person name="Kawabata A."/>
            <person name="Hikiji T."/>
            <person name="Kobatake N."/>
            <person name="Inagaki H."/>
            <person name="Ikema Y."/>
            <person name="Okamoto S."/>
            <person name="Okitani R."/>
            <person name="Kawakami T."/>
            <person name="Noguchi S."/>
            <person name="Itoh T."/>
            <person name="Shigeta K."/>
            <person name="Senba T."/>
            <person name="Matsumura K."/>
            <person name="Nakajima Y."/>
            <person name="Mizuno T."/>
            <person name="Morinaga M."/>
            <person name="Sasaki M."/>
            <person name="Togashi T."/>
            <person name="Oyama M."/>
            <person name="Hata H."/>
            <person name="Watanabe M."/>
            <person name="Komatsu T."/>
            <person name="Mizushima-Sugano J."/>
            <person name="Satoh T."/>
            <person name="Shirai Y."/>
            <person name="Takahashi Y."/>
            <person name="Nakagawa K."/>
            <person name="Okumura K."/>
            <person name="Nagase T."/>
            <person name="Nomura N."/>
            <person name="Kikuchi H."/>
            <person name="Masuho Y."/>
            <person name="Yamashita R."/>
            <person name="Nakai K."/>
            <person name="Yada T."/>
            <person name="Nakamura Y."/>
            <person name="Ohara O."/>
            <person name="Isogai T."/>
            <person name="Sugano S."/>
        </authorList>
    </citation>
    <scope>NUCLEOTIDE SEQUENCE [LARGE SCALE MRNA] (ISOFORMS 1 AND 4)</scope>
    <scope>VARIANT LEU-932</scope>
    <source>
        <tissue>Testis</tissue>
    </source>
</reference>
<reference key="3">
    <citation type="journal article" date="2006" name="Nature">
        <title>Analysis of the DNA sequence and duplication history of human chromosome 15.</title>
        <authorList>
            <person name="Zody M.C."/>
            <person name="Garber M."/>
            <person name="Sharpe T."/>
            <person name="Young S.K."/>
            <person name="Rowen L."/>
            <person name="O'Neill K."/>
            <person name="Whittaker C.A."/>
            <person name="Kamal M."/>
            <person name="Chang J.L."/>
            <person name="Cuomo C.A."/>
            <person name="Dewar K."/>
            <person name="FitzGerald M.G."/>
            <person name="Kodira C.D."/>
            <person name="Madan A."/>
            <person name="Qin S."/>
            <person name="Yang X."/>
            <person name="Abbasi N."/>
            <person name="Abouelleil A."/>
            <person name="Arachchi H.M."/>
            <person name="Baradarani L."/>
            <person name="Birditt B."/>
            <person name="Bloom S."/>
            <person name="Bloom T."/>
            <person name="Borowsky M.L."/>
            <person name="Burke J."/>
            <person name="Butler J."/>
            <person name="Cook A."/>
            <person name="DeArellano K."/>
            <person name="DeCaprio D."/>
            <person name="Dorris L. III"/>
            <person name="Dors M."/>
            <person name="Eichler E.E."/>
            <person name="Engels R."/>
            <person name="Fahey J."/>
            <person name="Fleetwood P."/>
            <person name="Friedman C."/>
            <person name="Gearin G."/>
            <person name="Hall J.L."/>
            <person name="Hensley G."/>
            <person name="Johnson E."/>
            <person name="Jones C."/>
            <person name="Kamat A."/>
            <person name="Kaur A."/>
            <person name="Locke D.P."/>
            <person name="Madan A."/>
            <person name="Munson G."/>
            <person name="Jaffe D.B."/>
            <person name="Lui A."/>
            <person name="Macdonald P."/>
            <person name="Mauceli E."/>
            <person name="Naylor J.W."/>
            <person name="Nesbitt R."/>
            <person name="Nicol R."/>
            <person name="O'Leary S.B."/>
            <person name="Ratcliffe A."/>
            <person name="Rounsley S."/>
            <person name="She X."/>
            <person name="Sneddon K.M.B."/>
            <person name="Stewart S."/>
            <person name="Sougnez C."/>
            <person name="Stone S.M."/>
            <person name="Topham K."/>
            <person name="Vincent D."/>
            <person name="Wang S."/>
            <person name="Zimmer A.R."/>
            <person name="Birren B.W."/>
            <person name="Hood L."/>
            <person name="Lander E.S."/>
            <person name="Nusbaum C."/>
        </authorList>
    </citation>
    <scope>NUCLEOTIDE SEQUENCE [LARGE SCALE GENOMIC DNA]</scope>
</reference>
<reference key="4">
    <citation type="submission" date="2005-07" db="EMBL/GenBank/DDBJ databases">
        <authorList>
            <person name="Mural R.J."/>
            <person name="Istrail S."/>
            <person name="Sutton G.G."/>
            <person name="Florea L."/>
            <person name="Halpern A.L."/>
            <person name="Mobarry C.M."/>
            <person name="Lippert R."/>
            <person name="Walenz B."/>
            <person name="Shatkay H."/>
            <person name="Dew I."/>
            <person name="Miller J.R."/>
            <person name="Flanigan M.J."/>
            <person name="Edwards N.J."/>
            <person name="Bolanos R."/>
            <person name="Fasulo D."/>
            <person name="Halldorsson B.V."/>
            <person name="Hannenhalli S."/>
            <person name="Turner R."/>
            <person name="Yooseph S."/>
            <person name="Lu F."/>
            <person name="Nusskern D.R."/>
            <person name="Shue B.C."/>
            <person name="Zheng X.H."/>
            <person name="Zhong F."/>
            <person name="Delcher A.L."/>
            <person name="Huson D.H."/>
            <person name="Kravitz S.A."/>
            <person name="Mouchard L."/>
            <person name="Reinert K."/>
            <person name="Remington K.A."/>
            <person name="Clark A.G."/>
            <person name="Waterman M.S."/>
            <person name="Eichler E.E."/>
            <person name="Adams M.D."/>
            <person name="Hunkapiller M.W."/>
            <person name="Myers E.W."/>
            <person name="Venter J.C."/>
        </authorList>
    </citation>
    <scope>NUCLEOTIDE SEQUENCE [LARGE SCALE GENOMIC DNA]</scope>
    <scope>VARIANT LEU-932</scope>
</reference>
<reference key="5">
    <citation type="journal article" date="2004" name="Genome Res.">
        <title>The status, quality, and expansion of the NIH full-length cDNA project: the Mammalian Gene Collection (MGC).</title>
        <authorList>
            <consortium name="The MGC Project Team"/>
        </authorList>
    </citation>
    <scope>NUCLEOTIDE SEQUENCE [LARGE SCALE MRNA] (ISOFORMS 1; 2; 3 AND 5)</scope>
    <scope>VARIANT LEU-932</scope>
    <source>
        <tissue>Medulla oblongata</tissue>
        <tissue>Testis</tissue>
    </source>
</reference>
<reference key="6">
    <citation type="journal article" date="2007" name="BMC Genomics">
        <title>The full-ORF clone resource of the German cDNA consortium.</title>
        <authorList>
            <person name="Bechtel S."/>
            <person name="Rosenfelder H."/>
            <person name="Duda A."/>
            <person name="Schmidt C.P."/>
            <person name="Ernst U."/>
            <person name="Wellenreuther R."/>
            <person name="Mehrle A."/>
            <person name="Schuster C."/>
            <person name="Bahr A."/>
            <person name="Bloecker H."/>
            <person name="Heubner D."/>
            <person name="Hoerlein A."/>
            <person name="Michel G."/>
            <person name="Wedler H."/>
            <person name="Koehrer K."/>
            <person name="Ottenwaelder B."/>
            <person name="Poustka A."/>
            <person name="Wiemann S."/>
            <person name="Schupp I."/>
        </authorList>
    </citation>
    <scope>NUCLEOTIDE SEQUENCE [LARGE SCALE MRNA] OF 810-1027 (ISOFORMS 1/2)</scope>
    <scope>VARIANT LEU-932</scope>
    <source>
        <tissue>Testis</tissue>
    </source>
</reference>
<gene>
    <name type="primary">IQCH</name>
</gene>
<proteinExistence type="evidence at protein level"/>
<feature type="chain" id="PRO_0000282565" description="IQ domain-containing protein H">
    <location>
        <begin position="1"/>
        <end position="1027"/>
    </location>
</feature>
<feature type="domain" description="IQ" evidence="1">
    <location>
        <begin position="369"/>
        <end position="398"/>
    </location>
</feature>
<feature type="region of interest" description="Disordered" evidence="2">
    <location>
        <begin position="216"/>
        <end position="252"/>
    </location>
</feature>
<feature type="region of interest" description="Disordered" evidence="2">
    <location>
        <begin position="1007"/>
        <end position="1027"/>
    </location>
</feature>
<feature type="compositionally biased region" description="Basic residues" evidence="2">
    <location>
        <begin position="231"/>
        <end position="252"/>
    </location>
</feature>
<feature type="splice variant" id="VSP_024188" description="In isoform 2." evidence="9">
    <location>
        <begin position="1"/>
        <end position="252"/>
    </location>
</feature>
<feature type="splice variant" id="VSP_024189" description="In isoform 4." evidence="8">
    <location>
        <begin position="1"/>
        <end position="248"/>
    </location>
</feature>
<feature type="splice variant" id="VSP_024190" description="In isoform 3." evidence="9">
    <location>
        <begin position="1"/>
        <end position="173"/>
    </location>
</feature>
<feature type="splice variant" id="VSP_045251" description="In isoform 5." evidence="9">
    <original>IKVSKLIKGSNISSLTVLPSSHCTDPYFTPIPVLQADAH</original>
    <variation>RKIGLNVKILQDPENIHHRAAVNANYGISLPYINQRKAC</variation>
    <location>
        <begin position="130"/>
        <end position="168"/>
    </location>
</feature>
<feature type="splice variant" id="VSP_045252" description="In isoform 5." evidence="9">
    <location>
        <begin position="169"/>
        <end position="1027"/>
    </location>
</feature>
<feature type="splice variant" id="VSP_024191" description="In isoform 4." evidence="8">
    <original>DR</original>
    <variation>MT</variation>
    <location>
        <begin position="249"/>
        <end position="250"/>
    </location>
</feature>
<feature type="splice variant" id="VSP_024192" description="In isoform 3." evidence="9">
    <original>YSQPVREHIADFNTQQNMQL</original>
    <variation>ITLLPANLSATSITHHIMAP</variation>
    <location>
        <begin position="459"/>
        <end position="478"/>
    </location>
</feature>
<feature type="splice variant" id="VSP_024193" description="In isoform 3." evidence="9">
    <location>
        <begin position="479"/>
        <end position="1027"/>
    </location>
</feature>
<feature type="splice variant" id="VSP_024194" description="In isoform 2 and isoform 4." evidence="8 9">
    <location>
        <begin position="545"/>
        <end position="635"/>
    </location>
</feature>
<feature type="splice variant" id="VSP_024195" description="In isoform 4." evidence="8">
    <original>ERQGTVFILYEHLKRHKLGMLTIGEDL</original>
    <variation>NNRRGSPGGPHDLCSPSLHHPSRNIST</variation>
    <location>
        <begin position="934"/>
        <end position="960"/>
    </location>
</feature>
<feature type="splice variant" id="VSP_024196" description="In isoform 4." evidence="8">
    <location>
        <begin position="961"/>
        <end position="1027"/>
    </location>
</feature>
<feature type="sequence variant" id="VAR_051077" description="In dbSNP:rs3985641." evidence="3 4 5 6 7">
    <original>V</original>
    <variation>L</variation>
    <location>
        <position position="932"/>
    </location>
</feature>
<feature type="sequence conflict" description="In Ref. 1; AAK27307." evidence="10" ref="1">
    <original>S</original>
    <variation>T</variation>
    <location>
        <position position="33"/>
    </location>
</feature>
<keyword id="KW-0025">Alternative splicing</keyword>
<keyword id="KW-1267">Proteomics identification</keyword>
<keyword id="KW-1185">Reference proteome</keyword>
<sequence length="1027" mass="117349">MAQNTENHDPVGSILIQIHEDLYQLKEKLTKFSPEEKGETLDIQSLETAIKRTEVGLRIHIEKYLNVVNQNVLTTSVNDESLYTPQASKWLLPTVIDQKSFIFPQESEGTFWQPQRQHSSSLPVFPRAKIKVSKLIKGSNISSLTVLPSSHCTDPYFTPIPVLQADAHKGILSMIERGLIPPTARITFQNPPITPRAAPLHSFDEARKIPTVATFTIPREPPPSPAEVKFFPKKQRSKGKSRRSRGHHDRKAMKVKTPLRALKSLWDYDFLIYDGVIDNTAPDFLAFKEHFSLAWGGIFSLLEHVEKFLRNYAIPEVKIKGNNLVALLPEFELTNKLTRYDLLSVLEDPAHVQMLINLPGQRYKGQDGNSEAAMKIQATWKCYKARKFFLFYRQQKWASGVIAIAWLLYCHKTRLKKILKESRQRHLENFRIRAKHLAANWNRIRTSRRTIIHIPSLGYSQPVREHIADFNTQQNMQLGRLCDILDANVNVIYICSHHMNDELVLYYKKILSLHAAVKSGNLEDRSDLQDRFKIITPEAVNIFPKHHMCLATHLMYSPKAIKRIKNLIRGTEAYIVSGLLHRDDLAVADMLDIPILGSEPELAHLYSTKSGGKRVFDSANVAVPPGIYDIYSQQQMIEQLSQLITDHLQIQRWLFKMDSEFRGNGTAFCDIPSYLKCYKWVLKESSRYGLEDWRKKWAQEPALVKISEELAGILAQHAQPVNEKRFPTWRKFLQTFLSQGGVIEAFPPADNVTNLTVDMLIEPNGKISVLSTGDQLHAESPFISSGTTVPQTSVDPQVLTYLCLQIGKACRMRDVVGYFSIDLVTFIDPSTLEQQVWATGLNLAYSDQLALTQLTLYLTNGHLDCSLSTLEVPRFVPKERKKTKCMSALSMPMLATSRYAVMTTQLRHSNLSLVFHYVFLQICRAHGIGYDVEERQGTVFILYEHLKRHKLGMLTIGEDLQGVLMTFARHLFIIHQEISAPNMQGETNFKTTIADIETILRVTKENKMRFEEEQQSKDDKNLSKPKK</sequence>
<organism>
    <name type="scientific">Homo sapiens</name>
    <name type="common">Human</name>
    <dbReference type="NCBI Taxonomy" id="9606"/>
    <lineage>
        <taxon>Eukaryota</taxon>
        <taxon>Metazoa</taxon>
        <taxon>Chordata</taxon>
        <taxon>Craniata</taxon>
        <taxon>Vertebrata</taxon>
        <taxon>Euteleostomi</taxon>
        <taxon>Mammalia</taxon>
        <taxon>Eutheria</taxon>
        <taxon>Euarchontoglires</taxon>
        <taxon>Primates</taxon>
        <taxon>Haplorrhini</taxon>
        <taxon>Catarrhini</taxon>
        <taxon>Hominidae</taxon>
        <taxon>Homo</taxon>
    </lineage>
</organism>
<comment type="function">
    <text evidence="5">May play a regulatory role in spermatogenesis.</text>
</comment>
<comment type="alternative products">
    <event type="alternative splicing"/>
    <isoform>
        <id>Q86VS3-1</id>
        <name>1</name>
        <sequence type="displayed"/>
    </isoform>
    <isoform>
        <id>Q86VS3-2</id>
        <name>2</name>
        <sequence type="described" ref="VSP_024188 VSP_024194"/>
    </isoform>
    <isoform>
        <id>Q86VS3-3</id>
        <name>3</name>
        <sequence type="described" ref="VSP_024190 VSP_024192 VSP_024193"/>
    </isoform>
    <isoform>
        <id>Q86VS3-4</id>
        <name>4</name>
        <sequence type="described" ref="VSP_024189 VSP_024191 VSP_024194 VSP_024195 VSP_024196"/>
    </isoform>
    <isoform>
        <id>Q86VS3-5</id>
        <name>5</name>
        <sequence type="described" ref="VSP_045251 VSP_045252"/>
    </isoform>
</comment>
<comment type="tissue specificity">
    <text evidence="5">Expressed in fetal and adult testis, in germ cells but not somatic cells.</text>
</comment>